<comment type="function">
    <text evidence="1">Required for endonucleolytic cleavage during polyadenylation-dependent pre-mRNA 3'-end formation.</text>
</comment>
<comment type="subunit">
    <text evidence="1">Component of a pre-mRNA cleavage factor complex. Interacts directly with PCF11.</text>
</comment>
<comment type="subcellular location">
    <subcellularLocation>
        <location evidence="1">Nucleus</location>
    </subcellularLocation>
</comment>
<comment type="similarity">
    <text evidence="1">Belongs to the Clp1 family. Clp1 subfamily.</text>
</comment>
<comment type="caution">
    <text evidence="2">May lack the polyribonucleotide 5'-hydroxyl-kinase and polynucleotide 5'-hydroxyl-kinase activities that are characteristic of the human ortholog.</text>
</comment>
<sequence length="451" mass="50654">MAEVEALPGLKQPVDDAGLLEDANQVHTLVIPSGHIWRVELSSDEKLSLKVTAGIGEIFGTELANNVEYTFWDWKFGIYAVEELEIEWKCPQLHDRELSIVENTTAHNVYNLHFALEKMRSSTFDGPRIMVVGEKNTGKTALCRTLCSYAIKNKPYQPMFVNLNPVEPIFSPPGCVTAVPISSTLDAQLPRWGETMTSGATRLHGKQPIIKNFGFETIAENRSLYKLVTKKLFETVSERLQNDSLVHRSGCIVDSPPLENCDDEYSELVEAIVGLRINYLIILCNDNDKGREIYTKVSKIVNTYVGERLLRVPTMAGVFEKDDVYIRAQQRAAIREYFYGDTRTVLSPYNLGCDTSDITVWRPKSVLQGENTNLDTLEVAPVDSSTLQYALVAITYASRKSDSEEVLQAPILGFGLITELNEKRNKLKILLPVPGRLPPNAMILTSFRYLE</sequence>
<gene>
    <name evidence="1" type="primary">CLP1</name>
    <name type="ordered locus">CAGL0K09086g</name>
</gene>
<keyword id="KW-0067">ATP-binding</keyword>
<keyword id="KW-0507">mRNA processing</keyword>
<keyword id="KW-0547">Nucleotide-binding</keyword>
<keyword id="KW-0539">Nucleus</keyword>
<keyword id="KW-1185">Reference proteome</keyword>
<proteinExistence type="inferred from homology"/>
<organism>
    <name type="scientific">Candida glabrata (strain ATCC 2001 / BCRC 20586 / JCM 3761 / NBRC 0622 / NRRL Y-65 / CBS 138)</name>
    <name type="common">Yeast</name>
    <name type="synonym">Nakaseomyces glabratus</name>
    <dbReference type="NCBI Taxonomy" id="284593"/>
    <lineage>
        <taxon>Eukaryota</taxon>
        <taxon>Fungi</taxon>
        <taxon>Dikarya</taxon>
        <taxon>Ascomycota</taxon>
        <taxon>Saccharomycotina</taxon>
        <taxon>Saccharomycetes</taxon>
        <taxon>Saccharomycetales</taxon>
        <taxon>Saccharomycetaceae</taxon>
        <taxon>Nakaseomyces</taxon>
    </lineage>
</organism>
<evidence type="ECO:0000255" key="1">
    <source>
        <dbReference type="HAMAP-Rule" id="MF_03035"/>
    </source>
</evidence>
<evidence type="ECO:0000305" key="2"/>
<name>CLP1_CANGA</name>
<reference key="1">
    <citation type="journal article" date="2004" name="Nature">
        <title>Genome evolution in yeasts.</title>
        <authorList>
            <person name="Dujon B."/>
            <person name="Sherman D."/>
            <person name="Fischer G."/>
            <person name="Durrens P."/>
            <person name="Casaregola S."/>
            <person name="Lafontaine I."/>
            <person name="de Montigny J."/>
            <person name="Marck C."/>
            <person name="Neuveglise C."/>
            <person name="Talla E."/>
            <person name="Goffard N."/>
            <person name="Frangeul L."/>
            <person name="Aigle M."/>
            <person name="Anthouard V."/>
            <person name="Babour A."/>
            <person name="Barbe V."/>
            <person name="Barnay S."/>
            <person name="Blanchin S."/>
            <person name="Beckerich J.-M."/>
            <person name="Beyne E."/>
            <person name="Bleykasten C."/>
            <person name="Boisrame A."/>
            <person name="Boyer J."/>
            <person name="Cattolico L."/>
            <person name="Confanioleri F."/>
            <person name="de Daruvar A."/>
            <person name="Despons L."/>
            <person name="Fabre E."/>
            <person name="Fairhead C."/>
            <person name="Ferry-Dumazet H."/>
            <person name="Groppi A."/>
            <person name="Hantraye F."/>
            <person name="Hennequin C."/>
            <person name="Jauniaux N."/>
            <person name="Joyet P."/>
            <person name="Kachouri R."/>
            <person name="Kerrest A."/>
            <person name="Koszul R."/>
            <person name="Lemaire M."/>
            <person name="Lesur I."/>
            <person name="Ma L."/>
            <person name="Muller H."/>
            <person name="Nicaud J.-M."/>
            <person name="Nikolski M."/>
            <person name="Oztas S."/>
            <person name="Ozier-Kalogeropoulos O."/>
            <person name="Pellenz S."/>
            <person name="Potier S."/>
            <person name="Richard G.-F."/>
            <person name="Straub M.-L."/>
            <person name="Suleau A."/>
            <person name="Swennen D."/>
            <person name="Tekaia F."/>
            <person name="Wesolowski-Louvel M."/>
            <person name="Westhof E."/>
            <person name="Wirth B."/>
            <person name="Zeniou-Meyer M."/>
            <person name="Zivanovic Y."/>
            <person name="Bolotin-Fukuhara M."/>
            <person name="Thierry A."/>
            <person name="Bouchier C."/>
            <person name="Caudron B."/>
            <person name="Scarpelli C."/>
            <person name="Gaillardin C."/>
            <person name="Weissenbach J."/>
            <person name="Wincker P."/>
            <person name="Souciet J.-L."/>
        </authorList>
    </citation>
    <scope>NUCLEOTIDE SEQUENCE [LARGE SCALE GENOMIC DNA]</scope>
    <source>
        <strain>ATCC 2001 / BCRC 20586 / JCM 3761 / NBRC 0622 / NRRL Y-65 / CBS 138</strain>
    </source>
</reference>
<protein>
    <recommendedName>
        <fullName evidence="1">mRNA cleavage and polyadenylation factor CLP1</fullName>
    </recommendedName>
</protein>
<feature type="chain" id="PRO_0000375200" description="mRNA cleavage and polyadenylation factor CLP1">
    <location>
        <begin position="1"/>
        <end position="451"/>
    </location>
</feature>
<feature type="binding site" evidence="1">
    <location>
        <position position="75"/>
    </location>
    <ligand>
        <name>ATP</name>
        <dbReference type="ChEBI" id="CHEBI:30616"/>
    </ligand>
</feature>
<feature type="binding site" evidence="1">
    <location>
        <begin position="136"/>
        <end position="141"/>
    </location>
    <ligand>
        <name>ATP</name>
        <dbReference type="ChEBI" id="CHEBI:30616"/>
    </ligand>
</feature>
<accession>Q6FMC8</accession>
<dbReference type="EMBL" id="CR380957">
    <property type="protein sequence ID" value="CAG61579.1"/>
    <property type="molecule type" value="Genomic_DNA"/>
</dbReference>
<dbReference type="RefSeq" id="XP_448616.1">
    <property type="nucleotide sequence ID" value="XM_448616.1"/>
</dbReference>
<dbReference type="SMR" id="Q6FMC8"/>
<dbReference type="FunCoup" id="Q6FMC8">
    <property type="interactions" value="867"/>
</dbReference>
<dbReference type="STRING" id="284593.Q6FMC8"/>
<dbReference type="EnsemblFungi" id="CAGL0K09086g-T">
    <property type="protein sequence ID" value="CAGL0K09086g-T-p1"/>
    <property type="gene ID" value="CAGL0K09086g"/>
</dbReference>
<dbReference type="KEGG" id="cgr:2890247"/>
<dbReference type="CGD" id="CAL0134843">
    <property type="gene designation" value="CAGL0K09086g"/>
</dbReference>
<dbReference type="VEuPathDB" id="FungiDB:CAGL0K09086g"/>
<dbReference type="eggNOG" id="KOG2749">
    <property type="taxonomic scope" value="Eukaryota"/>
</dbReference>
<dbReference type="HOGENOM" id="CLU_018195_3_0_1"/>
<dbReference type="InParanoid" id="Q6FMC8"/>
<dbReference type="OMA" id="VQYVNCH"/>
<dbReference type="Proteomes" id="UP000002428">
    <property type="component" value="Chromosome K"/>
</dbReference>
<dbReference type="GO" id="GO:0005849">
    <property type="term" value="C:mRNA cleavage factor complex"/>
    <property type="evidence" value="ECO:0007669"/>
    <property type="project" value="UniProtKB-UniRule"/>
</dbReference>
<dbReference type="GO" id="GO:0005524">
    <property type="term" value="F:ATP binding"/>
    <property type="evidence" value="ECO:0007669"/>
    <property type="project" value="UniProtKB-UniRule"/>
</dbReference>
<dbReference type="GO" id="GO:0051731">
    <property type="term" value="F:polynucleotide 5'-hydroxyl-kinase activity"/>
    <property type="evidence" value="ECO:0007669"/>
    <property type="project" value="InterPro"/>
</dbReference>
<dbReference type="GO" id="GO:0031124">
    <property type="term" value="P:mRNA 3'-end processing"/>
    <property type="evidence" value="ECO:0007669"/>
    <property type="project" value="UniProtKB-UniRule"/>
</dbReference>
<dbReference type="GO" id="GO:0006388">
    <property type="term" value="P:tRNA splicing, via endonucleolytic cleavage and ligation"/>
    <property type="evidence" value="ECO:0007669"/>
    <property type="project" value="TreeGrafter"/>
</dbReference>
<dbReference type="Gene3D" id="2.60.120.1030">
    <property type="entry name" value="Clp1, DNA binding domain"/>
    <property type="match status" value="1"/>
</dbReference>
<dbReference type="Gene3D" id="3.40.50.300">
    <property type="entry name" value="P-loop containing nucleotide triphosphate hydrolases"/>
    <property type="match status" value="1"/>
</dbReference>
<dbReference type="Gene3D" id="2.40.30.330">
    <property type="entry name" value="Pre-mRNA cleavage complex subunit Clp1, C-terminal domain"/>
    <property type="match status" value="1"/>
</dbReference>
<dbReference type="HAMAP" id="MF_03035">
    <property type="entry name" value="Clp1"/>
    <property type="match status" value="1"/>
</dbReference>
<dbReference type="InterPro" id="IPR028606">
    <property type="entry name" value="Clp1"/>
</dbReference>
<dbReference type="InterPro" id="IPR045116">
    <property type="entry name" value="Clp1/Grc3"/>
</dbReference>
<dbReference type="InterPro" id="IPR010655">
    <property type="entry name" value="Clp1_C"/>
</dbReference>
<dbReference type="InterPro" id="IPR038238">
    <property type="entry name" value="Clp1_C_sf"/>
</dbReference>
<dbReference type="InterPro" id="IPR032324">
    <property type="entry name" value="Clp1_N"/>
</dbReference>
<dbReference type="InterPro" id="IPR038239">
    <property type="entry name" value="Clp1_N_sf"/>
</dbReference>
<dbReference type="InterPro" id="IPR032319">
    <property type="entry name" value="CLP1_P"/>
</dbReference>
<dbReference type="InterPro" id="IPR027417">
    <property type="entry name" value="P-loop_NTPase"/>
</dbReference>
<dbReference type="PANTHER" id="PTHR12755">
    <property type="entry name" value="CLEAVAGE/POLYADENYLATION FACTOR IA SUBUNIT CLP1P"/>
    <property type="match status" value="1"/>
</dbReference>
<dbReference type="PANTHER" id="PTHR12755:SF6">
    <property type="entry name" value="POLYRIBONUCLEOTIDE 5'-HYDROXYL-KINASE CLP1"/>
    <property type="match status" value="1"/>
</dbReference>
<dbReference type="Pfam" id="PF06807">
    <property type="entry name" value="Clp1"/>
    <property type="match status" value="1"/>
</dbReference>
<dbReference type="Pfam" id="PF16573">
    <property type="entry name" value="CLP1_N"/>
    <property type="match status" value="1"/>
</dbReference>
<dbReference type="Pfam" id="PF16575">
    <property type="entry name" value="CLP1_P"/>
    <property type="match status" value="1"/>
</dbReference>